<gene>
    <name type="ordered locus">sll0944</name>
</gene>
<dbReference type="EMBL" id="BA000022">
    <property type="protein sequence ID" value="BAA10018.2"/>
    <property type="molecule type" value="Genomic_DNA"/>
</dbReference>
<dbReference type="PIR" id="S76040">
    <property type="entry name" value="S76040"/>
</dbReference>
<dbReference type="IntAct" id="P77971">
    <property type="interactions" value="4"/>
</dbReference>
<dbReference type="STRING" id="1148.gene:10499510"/>
<dbReference type="PaxDb" id="1148-14595184"/>
<dbReference type="EnsemblBacteria" id="BAA10018">
    <property type="protein sequence ID" value="BAA10018"/>
    <property type="gene ID" value="BAA10018"/>
</dbReference>
<dbReference type="KEGG" id="syn:sll0944"/>
<dbReference type="eggNOG" id="ENOG5032RJI">
    <property type="taxonomic scope" value="Bacteria"/>
</dbReference>
<dbReference type="InParanoid" id="P77971"/>
<dbReference type="Proteomes" id="UP000001425">
    <property type="component" value="Chromosome"/>
</dbReference>
<dbReference type="InterPro" id="IPR014964">
    <property type="entry name" value="DUF1830"/>
</dbReference>
<dbReference type="Pfam" id="PF08865">
    <property type="entry name" value="DUF1830"/>
    <property type="match status" value="1"/>
</dbReference>
<organism>
    <name type="scientific">Synechocystis sp. (strain ATCC 27184 / PCC 6803 / Kazusa)</name>
    <dbReference type="NCBI Taxonomy" id="1111708"/>
    <lineage>
        <taxon>Bacteria</taxon>
        <taxon>Bacillati</taxon>
        <taxon>Cyanobacteriota</taxon>
        <taxon>Cyanophyceae</taxon>
        <taxon>Synechococcales</taxon>
        <taxon>Merismopediaceae</taxon>
        <taxon>Synechocystis</taxon>
    </lineage>
</organism>
<protein>
    <recommendedName>
        <fullName>Uncharacterized protein sll0944</fullName>
    </recommendedName>
</protein>
<proteinExistence type="predicted"/>
<accession>P77971</accession>
<accession>P74783</accession>
<reference key="1">
    <citation type="journal article" date="1996" name="DNA Res.">
        <title>Sequence analysis of the genome of the unicellular cyanobacterium Synechocystis sp. strain PCC6803. II. Sequence determination of the entire genome and assignment of potential protein-coding regions.</title>
        <authorList>
            <person name="Kaneko T."/>
            <person name="Sato S."/>
            <person name="Kotani H."/>
            <person name="Tanaka A."/>
            <person name="Asamizu E."/>
            <person name="Nakamura Y."/>
            <person name="Miyajima N."/>
            <person name="Hirosawa M."/>
            <person name="Sugiura M."/>
            <person name="Sasamoto S."/>
            <person name="Kimura T."/>
            <person name="Hosouchi T."/>
            <person name="Matsuno A."/>
            <person name="Muraki A."/>
            <person name="Nakazaki N."/>
            <person name="Naruo K."/>
            <person name="Okumura S."/>
            <person name="Shimpo S."/>
            <person name="Takeuchi C."/>
            <person name="Wada T."/>
            <person name="Watanabe A."/>
            <person name="Yamada M."/>
            <person name="Yasuda M."/>
            <person name="Tabata S."/>
        </authorList>
    </citation>
    <scope>NUCLEOTIDE SEQUENCE [LARGE SCALE GENOMIC DNA]</scope>
    <source>
        <strain>ATCC 27184 / PCC 6803 / Kazusa</strain>
    </source>
</reference>
<evidence type="ECO:0000256" key="1">
    <source>
        <dbReference type="SAM" id="MobiDB-lite"/>
    </source>
</evidence>
<feature type="chain" id="PRO_0000157881" description="Uncharacterized protein sll0944">
    <location>
        <begin position="1"/>
        <end position="164"/>
    </location>
</feature>
<feature type="region of interest" description="Disordered" evidence="1">
    <location>
        <begin position="144"/>
        <end position="164"/>
    </location>
</feature>
<keyword id="KW-1185">Reference proteome</keyword>
<sequence length="164" mass="18152">MQCLGKIFLSPGTKPESKNLIVIIFTADRDQRVLALSRIVKRPFFNKNPMPAMSQILDPIPNNQPSALFCCYVNATNQIQVARITNVPNWYFERVVFPGQRLVFEAVPSAQLEIHTGMMASSIISDTIPCEQLSIDPDGLAAGGFISPEKEHESEDMTSQSLVA</sequence>
<name>Y94X_SYNY3</name>